<comment type="function">
    <text evidence="3">Catalyzes the deamination of aminodeoxyfutalosine (AFL) into futalosine (FL), a step in the biosynthesis of menaquinone (MK, vitamin K2). To a lesser extent, can also deaminate 5'-methylthioadenosine.</text>
</comment>
<comment type="catalytic activity">
    <reaction evidence="3">
        <text>6-amino-6-deoxyfutalosine + H2O + H(+) = futalosine + NH4(+)</text>
        <dbReference type="Rhea" id="RHEA:40075"/>
        <dbReference type="ChEBI" id="CHEBI:15377"/>
        <dbReference type="ChEBI" id="CHEBI:15378"/>
        <dbReference type="ChEBI" id="CHEBI:28938"/>
        <dbReference type="ChEBI" id="CHEBI:58863"/>
        <dbReference type="ChEBI" id="CHEBI:64286"/>
        <dbReference type="EC" id="3.5.4.40"/>
    </reaction>
</comment>
<comment type="cofactor">
    <cofactor evidence="3">
        <name>a divalent metal cation</name>
        <dbReference type="ChEBI" id="CHEBI:60240"/>
    </cofactor>
    <text evidence="3">Binds 1 divalent metal cation per subunit.</text>
</comment>
<comment type="biophysicochemical properties">
    <kinetics>
        <KM evidence="3">0.9 uM for aminodeoxyfutalosine</KM>
        <KM evidence="3">110 uM for 5'-methylthioadenosine</KM>
        <KM evidence="3">42 uM for 5'-deoxyadenosine</KM>
        <text>kcat is 1.28 sec(-1) with aminodeoxyfutalosine as substrate. kcat is 0.31 sec(-1) with 5'-methylthioadenosine as substrate. kcat is 0.017 sec(-1) with 5'-deoxyadenosine as substrate.</text>
    </kinetics>
</comment>
<comment type="pathway">
    <text evidence="3">Quinol/quinone metabolism; menaquinone biosynthesis.</text>
</comment>
<comment type="similarity">
    <text evidence="4">Belongs to the metallo-dependent hydrolases superfamily.</text>
</comment>
<name>MQNX_NITSB</name>
<reference key="1">
    <citation type="journal article" date="2007" name="Proc. Natl. Acad. Sci. U.S.A.">
        <title>Deep-sea vent epsilon-proteobacterial genomes provide insights into emergence of pathogens.</title>
        <authorList>
            <person name="Nakagawa S."/>
            <person name="Takaki Y."/>
            <person name="Shimamura S."/>
            <person name="Reysenbach A.-L."/>
            <person name="Takai K."/>
            <person name="Horikoshi K."/>
        </authorList>
    </citation>
    <scope>NUCLEOTIDE SEQUENCE [LARGE SCALE GENOMIC DNA]</scope>
    <source>
        <strain>SB155-2</strain>
    </source>
</reference>
<reference key="2">
    <citation type="journal article" date="2013" name="Biochemistry">
        <title>Deamination of 6-aminodeoxyfutalosine in menaquinone biosynthesis by distantly related enzymes.</title>
        <authorList>
            <person name="Goble A.M."/>
            <person name="Toro R."/>
            <person name="Li X."/>
            <person name="Ornelas A."/>
            <person name="Fan H."/>
            <person name="Eswaramoorthy S."/>
            <person name="Patskovsky Y."/>
            <person name="Hillerich B."/>
            <person name="Seidel R."/>
            <person name="Sali A."/>
            <person name="Shoichet B.K."/>
            <person name="Almo S.C."/>
            <person name="Swaminathan S."/>
            <person name="Tanner M.E."/>
            <person name="Raushel F.M."/>
        </authorList>
    </citation>
    <scope>X-RAY CRYSTALLOGRAPHY (1.08 ANGSTROMS) OF WILD-TYPE AND MUTANT ALA-145 IN COMPLEX WITH IRON AND BENZOATE</scope>
    <scope>FUNCTION</scope>
    <scope>CATALYTIC ACTIVITY</scope>
    <scope>SUBSTRATE SPECIFICITY</scope>
    <scope>KINETIC PARAMETERS</scope>
    <scope>COFACTOR</scope>
    <scope>PATHWAY</scope>
    <scope>MUTAGENESIS OF SER-145</scope>
    <source>
        <strain>SB155-2</strain>
    </source>
</reference>
<feature type="chain" id="PRO_0000425135" description="Aminodeoxyfutalosine deaminase">
    <location>
        <begin position="1"/>
        <end position="405"/>
    </location>
</feature>
<feature type="active site" description="Proton donor" evidence="1">
    <location>
        <position position="209"/>
    </location>
</feature>
<feature type="binding site">
    <location>
        <position position="61"/>
    </location>
    <ligand>
        <name>a divalent metal cation</name>
        <dbReference type="ChEBI" id="CHEBI:60240"/>
    </ligand>
</feature>
<feature type="binding site">
    <location>
        <position position="63"/>
    </location>
    <ligand>
        <name>a divalent metal cation</name>
        <dbReference type="ChEBI" id="CHEBI:60240"/>
    </ligand>
</feature>
<feature type="binding site" evidence="2">
    <location>
        <position position="141"/>
    </location>
    <ligand>
        <name>substrate</name>
    </ligand>
</feature>
<feature type="binding site" evidence="4">
    <location>
        <position position="145"/>
    </location>
    <ligand>
        <name>substrate</name>
    </ligand>
</feature>
<feature type="binding site" evidence="2">
    <location>
        <position position="179"/>
    </location>
    <ligand>
        <name>substrate</name>
    </ligand>
</feature>
<feature type="binding site">
    <location>
        <position position="206"/>
    </location>
    <ligand>
        <name>a divalent metal cation</name>
        <dbReference type="ChEBI" id="CHEBI:60240"/>
    </ligand>
</feature>
<feature type="binding site">
    <location>
        <position position="306"/>
    </location>
    <ligand>
        <name>a divalent metal cation</name>
        <dbReference type="ChEBI" id="CHEBI:60240"/>
    </ligand>
</feature>
<feature type="mutagenesis site" description="3-fold reduction in catalytic efficiency with AFL as substrate." evidence="3">
    <original>S</original>
    <variation>A</variation>
    <location>
        <position position="145"/>
    </location>
</feature>
<feature type="strand" evidence="5">
    <location>
        <begin position="2"/>
        <end position="10"/>
    </location>
</feature>
<feature type="strand" evidence="5">
    <location>
        <begin position="12"/>
        <end position="18"/>
    </location>
</feature>
<feature type="strand" evidence="5">
    <location>
        <begin position="20"/>
        <end position="31"/>
    </location>
</feature>
<feature type="helix" evidence="5">
    <location>
        <begin position="33"/>
        <end position="39"/>
    </location>
</feature>
<feature type="strand" evidence="5">
    <location>
        <begin position="44"/>
        <end position="55"/>
    </location>
</feature>
<feature type="strand" evidence="5">
    <location>
        <begin position="57"/>
        <end position="62"/>
    </location>
</feature>
<feature type="helix" evidence="5">
    <location>
        <begin position="64"/>
        <end position="66"/>
    </location>
</feature>
<feature type="strand" evidence="5">
    <location>
        <begin position="70"/>
        <end position="73"/>
    </location>
</feature>
<feature type="helix" evidence="5">
    <location>
        <begin position="78"/>
        <end position="95"/>
    </location>
</feature>
<feature type="helix" evidence="5">
    <location>
        <begin position="98"/>
        <end position="110"/>
    </location>
</feature>
<feature type="strand" evidence="5">
    <location>
        <begin position="113"/>
        <end position="123"/>
    </location>
</feature>
<feature type="helix" evidence="5">
    <location>
        <begin position="126"/>
        <end position="131"/>
    </location>
</feature>
<feature type="strand" evidence="5">
    <location>
        <begin position="132"/>
        <end position="142"/>
    </location>
</feature>
<feature type="helix" evidence="5">
    <location>
        <begin position="147"/>
        <end position="149"/>
    </location>
</feature>
<feature type="helix" evidence="5">
    <location>
        <begin position="150"/>
        <end position="165"/>
    </location>
</feature>
<feature type="strand" evidence="5">
    <location>
        <begin position="172"/>
        <end position="178"/>
    </location>
</feature>
<feature type="turn" evidence="5">
    <location>
        <begin position="181"/>
        <end position="183"/>
    </location>
</feature>
<feature type="helix" evidence="5">
    <location>
        <begin position="186"/>
        <end position="199"/>
    </location>
</feature>
<feature type="strand" evidence="5">
    <location>
        <begin position="203"/>
        <end position="208"/>
    </location>
</feature>
<feature type="helix" evidence="5">
    <location>
        <begin position="211"/>
        <end position="219"/>
    </location>
</feature>
<feature type="helix" evidence="5">
    <location>
        <begin position="223"/>
        <end position="232"/>
    </location>
</feature>
<feature type="helix" evidence="5">
    <location>
        <begin position="241"/>
        <end position="246"/>
    </location>
</feature>
<feature type="turn" evidence="5">
    <location>
        <begin position="247"/>
        <end position="250"/>
    </location>
</feature>
<feature type="strand" evidence="5">
    <location>
        <begin position="251"/>
        <end position="257"/>
    </location>
</feature>
<feature type="helix" evidence="5">
    <location>
        <begin position="263"/>
        <end position="270"/>
    </location>
</feature>
<feature type="strand" evidence="5">
    <location>
        <begin position="272"/>
        <end position="278"/>
    </location>
</feature>
<feature type="helix" evidence="5">
    <location>
        <begin position="280"/>
        <end position="285"/>
    </location>
</feature>
<feature type="turn" evidence="5">
    <location>
        <begin position="293"/>
        <end position="298"/>
    </location>
</feature>
<feature type="strand" evidence="5">
    <location>
        <begin position="301"/>
        <end position="303"/>
    </location>
</feature>
<feature type="helix" evidence="5">
    <location>
        <begin position="316"/>
        <end position="326"/>
    </location>
</feature>
<feature type="helix" evidence="5">
    <location>
        <begin position="332"/>
        <end position="343"/>
    </location>
</feature>
<feature type="helix" evidence="5">
    <location>
        <begin position="345"/>
        <end position="351"/>
    </location>
</feature>
<feature type="strand" evidence="5">
    <location>
        <begin position="366"/>
        <end position="370"/>
    </location>
</feature>
<feature type="helix" evidence="5">
    <location>
        <begin position="378"/>
        <end position="380"/>
    </location>
</feature>
<feature type="helix" evidence="5">
    <location>
        <begin position="381"/>
        <end position="388"/>
    </location>
</feature>
<feature type="strand" evidence="5">
    <location>
        <begin position="393"/>
        <end position="397"/>
    </location>
</feature>
<feature type="strand" evidence="5">
    <location>
        <begin position="400"/>
        <end position="402"/>
    </location>
</feature>
<protein>
    <recommendedName>
        <fullName>Aminodeoxyfutalosine deaminase</fullName>
        <shortName>AFL deaminase</shortName>
        <shortName>Aminofutalosine deaminase</shortName>
        <ecNumber evidence="3">3.5.4.40</ecNumber>
    </recommendedName>
</protein>
<evidence type="ECO:0000250" key="1"/>
<evidence type="ECO:0000255" key="2"/>
<evidence type="ECO:0000269" key="3">
    <source>
    </source>
</evidence>
<evidence type="ECO:0000305" key="4"/>
<evidence type="ECO:0007829" key="5">
    <source>
        <dbReference type="PDB" id="4M51"/>
    </source>
</evidence>
<dbReference type="EC" id="3.5.4.40" evidence="3"/>
<dbReference type="EMBL" id="AP009178">
    <property type="protein sequence ID" value="BAF69543.1"/>
    <property type="molecule type" value="Genomic_DNA"/>
</dbReference>
<dbReference type="RefSeq" id="WP_012081806.1">
    <property type="nucleotide sequence ID" value="NC_009662.1"/>
</dbReference>
<dbReference type="PDB" id="3V7P">
    <property type="method" value="X-ray"/>
    <property type="resolution" value="1.35 A"/>
    <property type="chains" value="A=1-405"/>
</dbReference>
<dbReference type="PDB" id="4M51">
    <property type="method" value="X-ray"/>
    <property type="resolution" value="1.08 A"/>
    <property type="chains" value="A=1-405"/>
</dbReference>
<dbReference type="PDBsum" id="3V7P"/>
<dbReference type="PDBsum" id="4M51"/>
<dbReference type="SMR" id="A6Q234"/>
<dbReference type="STRING" id="387092.NIS_0429"/>
<dbReference type="KEGG" id="nis:NIS_0429"/>
<dbReference type="eggNOG" id="COG0402">
    <property type="taxonomic scope" value="Bacteria"/>
</dbReference>
<dbReference type="HOGENOM" id="CLU_012358_10_1_7"/>
<dbReference type="InParanoid" id="A6Q234"/>
<dbReference type="OrthoDB" id="9807210at2"/>
<dbReference type="BioCyc" id="MetaCyc:MONOMER-18223"/>
<dbReference type="BRENDA" id="3.5.4.40">
    <property type="organism ID" value="12235"/>
</dbReference>
<dbReference type="UniPathway" id="UPA00079"/>
<dbReference type="EvolutionaryTrace" id="A6Q234"/>
<dbReference type="Proteomes" id="UP000001118">
    <property type="component" value="Chromosome"/>
</dbReference>
<dbReference type="GO" id="GO:0016810">
    <property type="term" value="F:hydrolase activity, acting on carbon-nitrogen (but not peptide) bonds"/>
    <property type="evidence" value="ECO:0007669"/>
    <property type="project" value="InterPro"/>
</dbReference>
<dbReference type="GO" id="GO:0046872">
    <property type="term" value="F:metal ion binding"/>
    <property type="evidence" value="ECO:0007669"/>
    <property type="project" value="UniProtKB-KW"/>
</dbReference>
<dbReference type="GO" id="GO:0009234">
    <property type="term" value="P:menaquinone biosynthetic process"/>
    <property type="evidence" value="ECO:0007669"/>
    <property type="project" value="UniProtKB-UniPathway"/>
</dbReference>
<dbReference type="Gene3D" id="3.20.20.140">
    <property type="entry name" value="Metal-dependent hydrolases"/>
    <property type="match status" value="1"/>
</dbReference>
<dbReference type="Gene3D" id="2.30.40.10">
    <property type="entry name" value="Urease, subunit C, domain 1"/>
    <property type="match status" value="1"/>
</dbReference>
<dbReference type="InterPro" id="IPR006680">
    <property type="entry name" value="Amidohydro-rel"/>
</dbReference>
<dbReference type="InterPro" id="IPR011059">
    <property type="entry name" value="Metal-dep_hydrolase_composite"/>
</dbReference>
<dbReference type="InterPro" id="IPR032466">
    <property type="entry name" value="Metal_Hydrolase"/>
</dbReference>
<dbReference type="InterPro" id="IPR050287">
    <property type="entry name" value="MTA/SAH_deaminase"/>
</dbReference>
<dbReference type="NCBIfam" id="NF006269">
    <property type="entry name" value="PRK08418.1"/>
    <property type="match status" value="1"/>
</dbReference>
<dbReference type="PANTHER" id="PTHR43794:SF11">
    <property type="entry name" value="AMIDOHYDROLASE-RELATED DOMAIN-CONTAINING PROTEIN"/>
    <property type="match status" value="1"/>
</dbReference>
<dbReference type="PANTHER" id="PTHR43794">
    <property type="entry name" value="AMINOHYDROLASE SSNA-RELATED"/>
    <property type="match status" value="1"/>
</dbReference>
<dbReference type="Pfam" id="PF01979">
    <property type="entry name" value="Amidohydro_1"/>
    <property type="match status" value="1"/>
</dbReference>
<dbReference type="SUPFAM" id="SSF51338">
    <property type="entry name" value="Composite domain of metallo-dependent hydrolases"/>
    <property type="match status" value="1"/>
</dbReference>
<dbReference type="SUPFAM" id="SSF51556">
    <property type="entry name" value="Metallo-dependent hydrolases"/>
    <property type="match status" value="1"/>
</dbReference>
<accession>A6Q234</accession>
<sequence>MRIIKPFAILTPQTIIQDKAVAFDKKIEAIDTVENLIKKYPNAAVEHDENSLLLPGFANPHLHLEFSANKATLQYGDFIPWLYSVIRHREDLLPLCDGACLEQTLSSIIQTGTTAIGAISSYGEDLQACIDSALKVVYFNEVIGSNAATADVMYASFLERFHQSKKHENERFKAAVAIHSPYSVHYILAKRALDIAKKYGSLVSVHFMESRAEREWLDKGSGEFAKFFKEFLNQTRPVNDTKSFLELFKELHTLFVHMVWANEEEIQTIASYNAHIIHCPISNRLLGNGVLDLEKIKSIPYAIATDGLSSNYSLNMYEELKAALFVHPNKEATTFAKELIIRATKAGYDALGFEGGEIAVGKDADMQLIDLPEGLTNVEDLYLHVILHTTKPKKVYIQGEEHVRE</sequence>
<gene>
    <name type="ordered locus">NIS_0429</name>
</gene>
<keyword id="KW-0002">3D-structure</keyword>
<keyword id="KW-0378">Hydrolase</keyword>
<keyword id="KW-0408">Iron</keyword>
<keyword id="KW-0474">Menaquinone biosynthesis</keyword>
<keyword id="KW-0479">Metal-binding</keyword>
<keyword id="KW-1185">Reference proteome</keyword>
<organism>
    <name type="scientific">Nitratiruptor sp. (strain SB155-2)</name>
    <dbReference type="NCBI Taxonomy" id="387092"/>
    <lineage>
        <taxon>Bacteria</taxon>
        <taxon>Pseudomonadati</taxon>
        <taxon>Campylobacterota</taxon>
        <taxon>Epsilonproteobacteria</taxon>
        <taxon>Nautiliales</taxon>
        <taxon>Nitratiruptoraceae</taxon>
        <taxon>Nitratiruptor</taxon>
    </lineage>
</organism>
<proteinExistence type="evidence at protein level"/>